<dbReference type="EC" id="2.4.2.7" evidence="1"/>
<dbReference type="EMBL" id="AE017283">
    <property type="protein sequence ID" value="AAT82913.1"/>
    <property type="molecule type" value="Genomic_DNA"/>
</dbReference>
<dbReference type="RefSeq" id="WP_002517735.1">
    <property type="nucleotide sequence ID" value="NZ_CP025935.1"/>
</dbReference>
<dbReference type="SMR" id="Q6A8K3"/>
<dbReference type="EnsemblBacteria" id="AAT82913">
    <property type="protein sequence ID" value="AAT82913"/>
    <property type="gene ID" value="PPA1164"/>
</dbReference>
<dbReference type="KEGG" id="pac:PPA1164"/>
<dbReference type="eggNOG" id="COG0503">
    <property type="taxonomic scope" value="Bacteria"/>
</dbReference>
<dbReference type="HOGENOM" id="CLU_063339_3_0_11"/>
<dbReference type="UniPathway" id="UPA00588">
    <property type="reaction ID" value="UER00646"/>
</dbReference>
<dbReference type="Proteomes" id="UP000000603">
    <property type="component" value="Chromosome"/>
</dbReference>
<dbReference type="GO" id="GO:0005737">
    <property type="term" value="C:cytoplasm"/>
    <property type="evidence" value="ECO:0007669"/>
    <property type="project" value="UniProtKB-SubCell"/>
</dbReference>
<dbReference type="GO" id="GO:0002055">
    <property type="term" value="F:adenine binding"/>
    <property type="evidence" value="ECO:0007669"/>
    <property type="project" value="TreeGrafter"/>
</dbReference>
<dbReference type="GO" id="GO:0003999">
    <property type="term" value="F:adenine phosphoribosyltransferase activity"/>
    <property type="evidence" value="ECO:0007669"/>
    <property type="project" value="UniProtKB-UniRule"/>
</dbReference>
<dbReference type="GO" id="GO:0016208">
    <property type="term" value="F:AMP binding"/>
    <property type="evidence" value="ECO:0007669"/>
    <property type="project" value="TreeGrafter"/>
</dbReference>
<dbReference type="GO" id="GO:0006168">
    <property type="term" value="P:adenine salvage"/>
    <property type="evidence" value="ECO:0007669"/>
    <property type="project" value="InterPro"/>
</dbReference>
<dbReference type="GO" id="GO:0044209">
    <property type="term" value="P:AMP salvage"/>
    <property type="evidence" value="ECO:0007669"/>
    <property type="project" value="UniProtKB-UniRule"/>
</dbReference>
<dbReference type="GO" id="GO:0006166">
    <property type="term" value="P:purine ribonucleoside salvage"/>
    <property type="evidence" value="ECO:0007669"/>
    <property type="project" value="UniProtKB-KW"/>
</dbReference>
<dbReference type="CDD" id="cd06223">
    <property type="entry name" value="PRTases_typeI"/>
    <property type="match status" value="1"/>
</dbReference>
<dbReference type="FunFam" id="3.40.50.2020:FF:000004">
    <property type="entry name" value="Adenine phosphoribosyltransferase"/>
    <property type="match status" value="1"/>
</dbReference>
<dbReference type="Gene3D" id="3.40.50.2020">
    <property type="match status" value="1"/>
</dbReference>
<dbReference type="HAMAP" id="MF_00004">
    <property type="entry name" value="Aden_phosphoribosyltr"/>
    <property type="match status" value="1"/>
</dbReference>
<dbReference type="InterPro" id="IPR005764">
    <property type="entry name" value="Ade_phspho_trans"/>
</dbReference>
<dbReference type="InterPro" id="IPR000836">
    <property type="entry name" value="PRibTrfase_dom"/>
</dbReference>
<dbReference type="InterPro" id="IPR029057">
    <property type="entry name" value="PRTase-like"/>
</dbReference>
<dbReference type="InterPro" id="IPR050054">
    <property type="entry name" value="UPRTase/APRTase"/>
</dbReference>
<dbReference type="NCBIfam" id="TIGR01090">
    <property type="entry name" value="apt"/>
    <property type="match status" value="1"/>
</dbReference>
<dbReference type="NCBIfam" id="NF002634">
    <property type="entry name" value="PRK02304.1-3"/>
    <property type="match status" value="1"/>
</dbReference>
<dbReference type="NCBIfam" id="NF002636">
    <property type="entry name" value="PRK02304.1-5"/>
    <property type="match status" value="1"/>
</dbReference>
<dbReference type="PANTHER" id="PTHR32315">
    <property type="entry name" value="ADENINE PHOSPHORIBOSYLTRANSFERASE"/>
    <property type="match status" value="1"/>
</dbReference>
<dbReference type="PANTHER" id="PTHR32315:SF3">
    <property type="entry name" value="ADENINE PHOSPHORIBOSYLTRANSFERASE"/>
    <property type="match status" value="1"/>
</dbReference>
<dbReference type="Pfam" id="PF00156">
    <property type="entry name" value="Pribosyltran"/>
    <property type="match status" value="1"/>
</dbReference>
<dbReference type="SUPFAM" id="SSF53271">
    <property type="entry name" value="PRTase-like"/>
    <property type="match status" value="1"/>
</dbReference>
<dbReference type="PROSITE" id="PS00103">
    <property type="entry name" value="PUR_PYR_PR_TRANSFER"/>
    <property type="match status" value="1"/>
</dbReference>
<gene>
    <name evidence="1" type="primary">apt</name>
    <name type="ordered locus">PPA1164</name>
</gene>
<reference key="1">
    <citation type="journal article" date="2004" name="Science">
        <title>The complete genome sequence of Propionibacterium acnes, a commensal of human skin.</title>
        <authorList>
            <person name="Brueggemann H."/>
            <person name="Henne A."/>
            <person name="Hoster F."/>
            <person name="Liesegang H."/>
            <person name="Wiezer A."/>
            <person name="Strittmatter A."/>
            <person name="Hujer S."/>
            <person name="Duerre P."/>
            <person name="Gottschalk G."/>
        </authorList>
    </citation>
    <scope>NUCLEOTIDE SEQUENCE [LARGE SCALE GENOMIC DNA]</scope>
    <source>
        <strain>DSM 16379 / KPA171202</strain>
    </source>
</reference>
<accession>Q6A8K3</accession>
<comment type="function">
    <text evidence="1">Catalyzes a salvage reaction resulting in the formation of AMP, that is energically less costly than de novo synthesis.</text>
</comment>
<comment type="catalytic activity">
    <reaction evidence="1">
        <text>AMP + diphosphate = 5-phospho-alpha-D-ribose 1-diphosphate + adenine</text>
        <dbReference type="Rhea" id="RHEA:16609"/>
        <dbReference type="ChEBI" id="CHEBI:16708"/>
        <dbReference type="ChEBI" id="CHEBI:33019"/>
        <dbReference type="ChEBI" id="CHEBI:58017"/>
        <dbReference type="ChEBI" id="CHEBI:456215"/>
        <dbReference type="EC" id="2.4.2.7"/>
    </reaction>
</comment>
<comment type="pathway">
    <text evidence="1">Purine metabolism; AMP biosynthesis via salvage pathway; AMP from adenine: step 1/1.</text>
</comment>
<comment type="subunit">
    <text evidence="1">Homodimer.</text>
</comment>
<comment type="subcellular location">
    <subcellularLocation>
        <location evidence="1">Cytoplasm</location>
    </subcellularLocation>
</comment>
<comment type="similarity">
    <text evidence="1">Belongs to the purine/pyrimidine phosphoribosyltransferase family.</text>
</comment>
<protein>
    <recommendedName>
        <fullName evidence="1">Adenine phosphoribosyltransferase</fullName>
        <shortName evidence="1">APRT</shortName>
        <ecNumber evidence="1">2.4.2.7</ecNumber>
    </recommendedName>
</protein>
<feature type="chain" id="PRO_0000149429" description="Adenine phosphoribosyltransferase">
    <location>
        <begin position="1"/>
        <end position="177"/>
    </location>
</feature>
<proteinExistence type="inferred from homology"/>
<keyword id="KW-0963">Cytoplasm</keyword>
<keyword id="KW-0328">Glycosyltransferase</keyword>
<keyword id="KW-0660">Purine salvage</keyword>
<keyword id="KW-0808">Transferase</keyword>
<organism>
    <name type="scientific">Cutibacterium acnes (strain DSM 16379 / KPA171202)</name>
    <name type="common">Propionibacterium acnes</name>
    <dbReference type="NCBI Taxonomy" id="267747"/>
    <lineage>
        <taxon>Bacteria</taxon>
        <taxon>Bacillati</taxon>
        <taxon>Actinomycetota</taxon>
        <taxon>Actinomycetes</taxon>
        <taxon>Propionibacteriales</taxon>
        <taxon>Propionibacteriaceae</taxon>
        <taxon>Cutibacterium</taxon>
    </lineage>
</organism>
<evidence type="ECO:0000255" key="1">
    <source>
        <dbReference type="HAMAP-Rule" id="MF_00004"/>
    </source>
</evidence>
<name>APT_CUTAK</name>
<sequence>MTYRKDLIASLIRDVPDFPEPGVTFKDITPLLANPNGYAAAISELVDTASRDVDVVLGMEARGFMFAGPVALSLGAGFVPVRKPGKLPGDVYSQSFVLEYGSATLTVHQDAVQPGSKVLIVDDVLATAGTVRATASLVEQLGAELVGVSVLIELSALGGREKLDRAGIGPVNAVLTI</sequence>